<keyword id="KW-0028">Amino-acid biosynthesis</keyword>
<keyword id="KW-0055">Arginine biosynthesis</keyword>
<keyword id="KW-0067">ATP-binding</keyword>
<keyword id="KW-0963">Cytoplasm</keyword>
<keyword id="KW-0418">Kinase</keyword>
<keyword id="KW-0547">Nucleotide-binding</keyword>
<keyword id="KW-1185">Reference proteome</keyword>
<keyword id="KW-0808">Transferase</keyword>
<accession>Q16AA4</accession>
<evidence type="ECO:0000255" key="1">
    <source>
        <dbReference type="HAMAP-Rule" id="MF_00082"/>
    </source>
</evidence>
<organism>
    <name type="scientific">Roseobacter denitrificans (strain ATCC 33942 / OCh 114)</name>
    <name type="common">Erythrobacter sp. (strain OCh 114)</name>
    <name type="synonym">Roseobacter denitrificans</name>
    <dbReference type="NCBI Taxonomy" id="375451"/>
    <lineage>
        <taxon>Bacteria</taxon>
        <taxon>Pseudomonadati</taxon>
        <taxon>Pseudomonadota</taxon>
        <taxon>Alphaproteobacteria</taxon>
        <taxon>Rhodobacterales</taxon>
        <taxon>Roseobacteraceae</taxon>
        <taxon>Roseobacter</taxon>
    </lineage>
</organism>
<reference key="1">
    <citation type="journal article" date="2007" name="J. Bacteriol.">
        <title>The complete genome sequence of Roseobacter denitrificans reveals a mixotrophic rather than photosynthetic metabolism.</title>
        <authorList>
            <person name="Swingley W.D."/>
            <person name="Sadekar S."/>
            <person name="Mastrian S.D."/>
            <person name="Matthies H.J."/>
            <person name="Hao J."/>
            <person name="Ramos H."/>
            <person name="Acharya C.R."/>
            <person name="Conrad A.L."/>
            <person name="Taylor H.L."/>
            <person name="Dejesa L.C."/>
            <person name="Shah M.K."/>
            <person name="O'Huallachain M.E."/>
            <person name="Lince M.T."/>
            <person name="Blankenship R.E."/>
            <person name="Beatty J.T."/>
            <person name="Touchman J.W."/>
        </authorList>
    </citation>
    <scope>NUCLEOTIDE SEQUENCE [LARGE SCALE GENOMIC DNA]</scope>
    <source>
        <strain>ATCC 33942 / OCh 114</strain>
    </source>
</reference>
<feature type="chain" id="PRO_0000264751" description="Acetylglutamate kinase">
    <location>
        <begin position="1"/>
        <end position="287"/>
    </location>
</feature>
<feature type="binding site" evidence="1">
    <location>
        <begin position="70"/>
        <end position="71"/>
    </location>
    <ligand>
        <name>substrate</name>
    </ligand>
</feature>
<feature type="binding site" evidence="1">
    <location>
        <position position="92"/>
    </location>
    <ligand>
        <name>substrate</name>
    </ligand>
</feature>
<feature type="binding site" evidence="1">
    <location>
        <position position="184"/>
    </location>
    <ligand>
        <name>substrate</name>
    </ligand>
</feature>
<feature type="site" description="Transition state stabilizer" evidence="1">
    <location>
        <position position="35"/>
    </location>
</feature>
<feature type="site" description="Transition state stabilizer" evidence="1">
    <location>
        <position position="244"/>
    </location>
</feature>
<dbReference type="EC" id="2.7.2.8" evidence="1"/>
<dbReference type="EMBL" id="CP000362">
    <property type="protein sequence ID" value="ABG31089.1"/>
    <property type="molecule type" value="Genomic_DNA"/>
</dbReference>
<dbReference type="RefSeq" id="WP_011567709.1">
    <property type="nucleotide sequence ID" value="NC_008209.1"/>
</dbReference>
<dbReference type="SMR" id="Q16AA4"/>
<dbReference type="STRING" id="375451.RD1_1452"/>
<dbReference type="KEGG" id="rde:RD1_1452"/>
<dbReference type="eggNOG" id="COG0548">
    <property type="taxonomic scope" value="Bacteria"/>
</dbReference>
<dbReference type="HOGENOM" id="CLU_053680_0_0_5"/>
<dbReference type="UniPathway" id="UPA00068">
    <property type="reaction ID" value="UER00107"/>
</dbReference>
<dbReference type="Proteomes" id="UP000007029">
    <property type="component" value="Chromosome"/>
</dbReference>
<dbReference type="GO" id="GO:0005737">
    <property type="term" value="C:cytoplasm"/>
    <property type="evidence" value="ECO:0007669"/>
    <property type="project" value="UniProtKB-SubCell"/>
</dbReference>
<dbReference type="GO" id="GO:0003991">
    <property type="term" value="F:acetylglutamate kinase activity"/>
    <property type="evidence" value="ECO:0007669"/>
    <property type="project" value="UniProtKB-UniRule"/>
</dbReference>
<dbReference type="GO" id="GO:0005524">
    <property type="term" value="F:ATP binding"/>
    <property type="evidence" value="ECO:0007669"/>
    <property type="project" value="UniProtKB-UniRule"/>
</dbReference>
<dbReference type="GO" id="GO:0042450">
    <property type="term" value="P:arginine biosynthetic process via ornithine"/>
    <property type="evidence" value="ECO:0007669"/>
    <property type="project" value="UniProtKB-UniRule"/>
</dbReference>
<dbReference type="GO" id="GO:0006526">
    <property type="term" value="P:L-arginine biosynthetic process"/>
    <property type="evidence" value="ECO:0007669"/>
    <property type="project" value="UniProtKB-UniPathway"/>
</dbReference>
<dbReference type="CDD" id="cd04250">
    <property type="entry name" value="AAK_NAGK-C"/>
    <property type="match status" value="1"/>
</dbReference>
<dbReference type="FunFam" id="3.40.1160.10:FF:000004">
    <property type="entry name" value="Acetylglutamate kinase"/>
    <property type="match status" value="1"/>
</dbReference>
<dbReference type="Gene3D" id="3.40.1160.10">
    <property type="entry name" value="Acetylglutamate kinase-like"/>
    <property type="match status" value="1"/>
</dbReference>
<dbReference type="HAMAP" id="MF_00082">
    <property type="entry name" value="ArgB"/>
    <property type="match status" value="1"/>
</dbReference>
<dbReference type="InterPro" id="IPR036393">
    <property type="entry name" value="AceGlu_kinase-like_sf"/>
</dbReference>
<dbReference type="InterPro" id="IPR004662">
    <property type="entry name" value="AcgluKinase_fam"/>
</dbReference>
<dbReference type="InterPro" id="IPR037528">
    <property type="entry name" value="ArgB"/>
</dbReference>
<dbReference type="InterPro" id="IPR001048">
    <property type="entry name" value="Asp/Glu/Uridylate_kinase"/>
</dbReference>
<dbReference type="InterPro" id="IPR001057">
    <property type="entry name" value="Glu/AcGlu_kinase"/>
</dbReference>
<dbReference type="InterPro" id="IPR041727">
    <property type="entry name" value="NAGK-C"/>
</dbReference>
<dbReference type="NCBIfam" id="TIGR00761">
    <property type="entry name" value="argB"/>
    <property type="match status" value="1"/>
</dbReference>
<dbReference type="PANTHER" id="PTHR23342">
    <property type="entry name" value="N-ACETYLGLUTAMATE SYNTHASE"/>
    <property type="match status" value="1"/>
</dbReference>
<dbReference type="PANTHER" id="PTHR23342:SF0">
    <property type="entry name" value="N-ACETYLGLUTAMATE SYNTHASE, MITOCHONDRIAL"/>
    <property type="match status" value="1"/>
</dbReference>
<dbReference type="Pfam" id="PF00696">
    <property type="entry name" value="AA_kinase"/>
    <property type="match status" value="1"/>
</dbReference>
<dbReference type="PIRSF" id="PIRSF000728">
    <property type="entry name" value="NAGK"/>
    <property type="match status" value="1"/>
</dbReference>
<dbReference type="PRINTS" id="PR00474">
    <property type="entry name" value="GLU5KINASE"/>
</dbReference>
<dbReference type="SUPFAM" id="SSF53633">
    <property type="entry name" value="Carbamate kinase-like"/>
    <property type="match status" value="1"/>
</dbReference>
<protein>
    <recommendedName>
        <fullName evidence="1">Acetylglutamate kinase</fullName>
        <ecNumber evidence="1">2.7.2.8</ecNumber>
    </recommendedName>
    <alternativeName>
        <fullName evidence="1">N-acetyl-L-glutamate 5-phosphotransferase</fullName>
    </alternativeName>
    <alternativeName>
        <fullName evidence="1">NAG kinase</fullName>
        <shortName evidence="1">NAGK</shortName>
    </alternativeName>
</protein>
<sequence length="287" mass="30287">MKTQDMNRDWISTASTLNKALPYLQRYAGATVVIKLGGHSMGSDEAMDEFARDVVLMRQVGVNPVIVHGGGPMINAMLDKLDIKSEFVNGKRVTDRATMDVVEMVLSGLVNKRIVQAINGQGGCAVGISGKDARLITCCQTDPDLGFVGTPQDVDPRLLRDLTEKEYIPVIAPLGADQTGQTYNINGDTAAGAVAAALKADRLLLLTDVAGVKNDAGDVLTELSAKQIEDMTRDGTIAGGMIPKTETALAALRGGVRAAVILDGRAPNACLLELFTEHGAGSIIRAD</sequence>
<name>ARGB_ROSDO</name>
<proteinExistence type="inferred from homology"/>
<gene>
    <name evidence="1" type="primary">argB</name>
    <name type="ordered locus">RD1_1452</name>
</gene>
<comment type="function">
    <text evidence="1">Catalyzes the ATP-dependent phosphorylation of N-acetyl-L-glutamate.</text>
</comment>
<comment type="catalytic activity">
    <reaction evidence="1">
        <text>N-acetyl-L-glutamate + ATP = N-acetyl-L-glutamyl 5-phosphate + ADP</text>
        <dbReference type="Rhea" id="RHEA:14629"/>
        <dbReference type="ChEBI" id="CHEBI:30616"/>
        <dbReference type="ChEBI" id="CHEBI:44337"/>
        <dbReference type="ChEBI" id="CHEBI:57936"/>
        <dbReference type="ChEBI" id="CHEBI:456216"/>
        <dbReference type="EC" id="2.7.2.8"/>
    </reaction>
</comment>
<comment type="pathway">
    <text evidence="1">Amino-acid biosynthesis; L-arginine biosynthesis; N(2)-acetyl-L-ornithine from L-glutamate: step 2/4.</text>
</comment>
<comment type="subcellular location">
    <subcellularLocation>
        <location evidence="1">Cytoplasm</location>
    </subcellularLocation>
</comment>
<comment type="similarity">
    <text evidence="1">Belongs to the acetylglutamate kinase family. ArgB subfamily.</text>
</comment>